<protein>
    <recommendedName>
        <fullName evidence="1">Acetyl-coenzyme A carboxylase carboxyl transferase subunit beta</fullName>
        <shortName evidence="1">ACCase subunit beta</shortName>
        <shortName evidence="1">Acetyl-CoA carboxylase carboxyltransferase subunit beta</shortName>
        <ecNumber evidence="1">2.1.3.15</ecNumber>
    </recommendedName>
</protein>
<comment type="function">
    <text evidence="1">Component of the acetyl coenzyme A carboxylase (ACC) complex. Biotin carboxylase (BC) catalyzes the carboxylation of biotin on its carrier protein (BCCP) and then the CO(2) group is transferred by the transcarboxylase to acetyl-CoA to form malonyl-CoA.</text>
</comment>
<comment type="catalytic activity">
    <reaction evidence="1">
        <text>N(6)-carboxybiotinyl-L-lysyl-[protein] + acetyl-CoA = N(6)-biotinyl-L-lysyl-[protein] + malonyl-CoA</text>
        <dbReference type="Rhea" id="RHEA:54728"/>
        <dbReference type="Rhea" id="RHEA-COMP:10505"/>
        <dbReference type="Rhea" id="RHEA-COMP:10506"/>
        <dbReference type="ChEBI" id="CHEBI:57288"/>
        <dbReference type="ChEBI" id="CHEBI:57384"/>
        <dbReference type="ChEBI" id="CHEBI:83144"/>
        <dbReference type="ChEBI" id="CHEBI:83145"/>
        <dbReference type="EC" id="2.1.3.15"/>
    </reaction>
</comment>
<comment type="pathway">
    <text evidence="1">Lipid metabolism; malonyl-CoA biosynthesis; malonyl-CoA from acetyl-CoA: step 1/1.</text>
</comment>
<comment type="subunit">
    <text evidence="1">Acetyl-CoA carboxylase is a heterohexamer composed of biotin carboxyl carrier protein (AccB), biotin carboxylase (AccC) and two subunits each of ACCase subunit alpha (AccA) and ACCase subunit beta (AccD).</text>
</comment>
<comment type="subcellular location">
    <subcellularLocation>
        <location evidence="1">Cytoplasm</location>
    </subcellularLocation>
</comment>
<comment type="similarity">
    <text evidence="1">Belongs to the AccD/PCCB family.</text>
</comment>
<evidence type="ECO:0000255" key="1">
    <source>
        <dbReference type="HAMAP-Rule" id="MF_01395"/>
    </source>
</evidence>
<evidence type="ECO:0000255" key="2">
    <source>
        <dbReference type="PROSITE-ProRule" id="PRU01136"/>
    </source>
</evidence>
<evidence type="ECO:0000256" key="3">
    <source>
        <dbReference type="SAM" id="MobiDB-lite"/>
    </source>
</evidence>
<organism>
    <name type="scientific">Caulobacter vibrioides (strain NA1000 / CB15N)</name>
    <name type="common">Caulobacter crescentus</name>
    <dbReference type="NCBI Taxonomy" id="565050"/>
    <lineage>
        <taxon>Bacteria</taxon>
        <taxon>Pseudomonadati</taxon>
        <taxon>Pseudomonadota</taxon>
        <taxon>Alphaproteobacteria</taxon>
        <taxon>Caulobacterales</taxon>
        <taxon>Caulobacteraceae</taxon>
        <taxon>Caulobacter</taxon>
    </lineage>
</organism>
<accession>B8H660</accession>
<gene>
    <name evidence="1" type="primary">accD</name>
    <name type="ordered locus">CCNA_03656</name>
</gene>
<keyword id="KW-0067">ATP-binding</keyword>
<keyword id="KW-0963">Cytoplasm</keyword>
<keyword id="KW-0275">Fatty acid biosynthesis</keyword>
<keyword id="KW-0276">Fatty acid metabolism</keyword>
<keyword id="KW-0444">Lipid biosynthesis</keyword>
<keyword id="KW-0443">Lipid metabolism</keyword>
<keyword id="KW-0547">Nucleotide-binding</keyword>
<keyword id="KW-1185">Reference proteome</keyword>
<keyword id="KW-0808">Transferase</keyword>
<reference key="1">
    <citation type="journal article" date="2010" name="J. Bacteriol.">
        <title>The genetic basis of laboratory adaptation in Caulobacter crescentus.</title>
        <authorList>
            <person name="Marks M.E."/>
            <person name="Castro-Rojas C.M."/>
            <person name="Teiling C."/>
            <person name="Du L."/>
            <person name="Kapatral V."/>
            <person name="Walunas T.L."/>
            <person name="Crosson S."/>
        </authorList>
    </citation>
    <scope>NUCLEOTIDE SEQUENCE [LARGE SCALE GENOMIC DNA]</scope>
    <source>
        <strain>NA1000 / CB15N</strain>
    </source>
</reference>
<feature type="chain" id="PRO_0000389711" description="Acetyl-coenzyme A carboxylase carboxyl transferase subunit beta">
    <location>
        <begin position="1"/>
        <end position="307"/>
    </location>
</feature>
<feature type="domain" description="CoA carboxyltransferase N-terminal" evidence="2">
    <location>
        <begin position="45"/>
        <end position="307"/>
    </location>
</feature>
<feature type="region of interest" description="Disordered" evidence="3">
    <location>
        <begin position="1"/>
        <end position="26"/>
    </location>
</feature>
<feature type="compositionally biased region" description="Basic and acidic residues" evidence="3">
    <location>
        <begin position="7"/>
        <end position="21"/>
    </location>
</feature>
<sequence length="307" mass="32933">MAMAEPQDPKKGDKKTAERRGGGWLSRIAPGVRGAFAKRETPENLWVKCPDTGEMIFRSDLEAALWVTPAGRHMRIGPEARFKFTFDDGQYEALPTPPVVEDPLKFSDGKPYKDRLVAARKATGEPDAMAIGYGKVGGVDAVVLVQDFAFMGGSLGMAAGEGFIAAAKAALERQVPMIAFTAAGGARMQEGALSLMQMARTTLAINELKDAALPYVVVLTDPTTGGVTASYAMLGDIHLAEPGALIGFAGPRVIEQTIRETLPPGFQRSEYLVEKGMVDRVTHRKELPEVLGSLLGTLMMGRKRQAA</sequence>
<proteinExistence type="inferred from homology"/>
<dbReference type="EC" id="2.1.3.15" evidence="1"/>
<dbReference type="EMBL" id="CP001340">
    <property type="protein sequence ID" value="ACL97121.1"/>
    <property type="molecule type" value="Genomic_DNA"/>
</dbReference>
<dbReference type="RefSeq" id="WP_010921371.1">
    <property type="nucleotide sequence ID" value="NC_011916.1"/>
</dbReference>
<dbReference type="RefSeq" id="YP_002519029.1">
    <property type="nucleotide sequence ID" value="NC_011916.1"/>
</dbReference>
<dbReference type="SMR" id="B8H660"/>
<dbReference type="GeneID" id="7329747"/>
<dbReference type="KEGG" id="ccs:CCNA_03656"/>
<dbReference type="PATRIC" id="fig|565050.3.peg.3565"/>
<dbReference type="HOGENOM" id="CLU_015486_1_0_5"/>
<dbReference type="OrthoDB" id="9772975at2"/>
<dbReference type="PhylomeDB" id="B8H660"/>
<dbReference type="UniPathway" id="UPA00655">
    <property type="reaction ID" value="UER00711"/>
</dbReference>
<dbReference type="Proteomes" id="UP000001364">
    <property type="component" value="Chromosome"/>
</dbReference>
<dbReference type="GO" id="GO:0009329">
    <property type="term" value="C:acetate CoA-transferase complex"/>
    <property type="evidence" value="ECO:0007669"/>
    <property type="project" value="TreeGrafter"/>
</dbReference>
<dbReference type="GO" id="GO:0003989">
    <property type="term" value="F:acetyl-CoA carboxylase activity"/>
    <property type="evidence" value="ECO:0007669"/>
    <property type="project" value="InterPro"/>
</dbReference>
<dbReference type="GO" id="GO:0005524">
    <property type="term" value="F:ATP binding"/>
    <property type="evidence" value="ECO:0007669"/>
    <property type="project" value="UniProtKB-KW"/>
</dbReference>
<dbReference type="GO" id="GO:0016743">
    <property type="term" value="F:carboxyl- or carbamoyltransferase activity"/>
    <property type="evidence" value="ECO:0007669"/>
    <property type="project" value="UniProtKB-UniRule"/>
</dbReference>
<dbReference type="GO" id="GO:0006633">
    <property type="term" value="P:fatty acid biosynthetic process"/>
    <property type="evidence" value="ECO:0007669"/>
    <property type="project" value="UniProtKB-KW"/>
</dbReference>
<dbReference type="GO" id="GO:2001295">
    <property type="term" value="P:malonyl-CoA biosynthetic process"/>
    <property type="evidence" value="ECO:0007669"/>
    <property type="project" value="UniProtKB-UniRule"/>
</dbReference>
<dbReference type="Gene3D" id="3.90.226.10">
    <property type="entry name" value="2-enoyl-CoA Hydratase, Chain A, domain 1"/>
    <property type="match status" value="1"/>
</dbReference>
<dbReference type="HAMAP" id="MF_01395">
    <property type="entry name" value="AcetylCoA_CT_beta"/>
    <property type="match status" value="1"/>
</dbReference>
<dbReference type="InterPro" id="IPR034733">
    <property type="entry name" value="AcCoA_carboxyl_beta"/>
</dbReference>
<dbReference type="InterPro" id="IPR000438">
    <property type="entry name" value="Acetyl_CoA_COase_Trfase_b_su"/>
</dbReference>
<dbReference type="InterPro" id="IPR029045">
    <property type="entry name" value="ClpP/crotonase-like_dom_sf"/>
</dbReference>
<dbReference type="InterPro" id="IPR011762">
    <property type="entry name" value="COA_CT_N"/>
</dbReference>
<dbReference type="PANTHER" id="PTHR42995">
    <property type="entry name" value="ACETYL-COENZYME A CARBOXYLASE CARBOXYL TRANSFERASE SUBUNIT BETA, CHLOROPLASTIC"/>
    <property type="match status" value="1"/>
</dbReference>
<dbReference type="PANTHER" id="PTHR42995:SF5">
    <property type="entry name" value="ACETYL-COENZYME A CARBOXYLASE CARBOXYL TRANSFERASE SUBUNIT BETA, CHLOROPLASTIC"/>
    <property type="match status" value="1"/>
</dbReference>
<dbReference type="Pfam" id="PF01039">
    <property type="entry name" value="Carboxyl_trans"/>
    <property type="match status" value="1"/>
</dbReference>
<dbReference type="PRINTS" id="PR01070">
    <property type="entry name" value="ACCCTRFRASEB"/>
</dbReference>
<dbReference type="SUPFAM" id="SSF52096">
    <property type="entry name" value="ClpP/crotonase"/>
    <property type="match status" value="1"/>
</dbReference>
<dbReference type="PROSITE" id="PS50980">
    <property type="entry name" value="COA_CT_NTER"/>
    <property type="match status" value="1"/>
</dbReference>
<name>ACCD_CAUVN</name>